<feature type="chain" id="PRO_0000253234" description="Uncharacterized protein L228">
    <location>
        <begin position="1"/>
        <end position="633"/>
    </location>
</feature>
<organism>
    <name type="scientific">Acanthamoeba polyphaga mimivirus</name>
    <name type="common">APMV</name>
    <dbReference type="NCBI Taxonomy" id="212035"/>
    <lineage>
        <taxon>Viruses</taxon>
        <taxon>Varidnaviria</taxon>
        <taxon>Bamfordvirae</taxon>
        <taxon>Nucleocytoviricota</taxon>
        <taxon>Megaviricetes</taxon>
        <taxon>Imitervirales</taxon>
        <taxon>Mimiviridae</taxon>
        <taxon>Megamimivirinae</taxon>
        <taxon>Mimivirus</taxon>
        <taxon>Mimivirus bradfordmassiliense</taxon>
    </lineage>
</organism>
<name>YL228_MIMIV</name>
<protein>
    <recommendedName>
        <fullName>Uncharacterized protein L228</fullName>
    </recommendedName>
</protein>
<dbReference type="EMBL" id="AY653733">
    <property type="protein sequence ID" value="AAV50501.1"/>
    <property type="molecule type" value="Genomic_DNA"/>
</dbReference>
<dbReference type="SMR" id="Q5UQC5"/>
<dbReference type="KEGG" id="vg:9924835"/>
<dbReference type="OrthoDB" id="32221at10239"/>
<dbReference type="Proteomes" id="UP000001134">
    <property type="component" value="Genome"/>
</dbReference>
<dbReference type="SUPFAM" id="SSF140860">
    <property type="entry name" value="Pseudo ankyrin repeat-like"/>
    <property type="match status" value="1"/>
</dbReference>
<accession>Q5UQC5</accession>
<gene>
    <name type="ordered locus">MIMI_L228</name>
</gene>
<sequence length="633" mass="74983">MDNLFGKMFYLIKQIGTDQYPMYLIIDRLNIISFLNEKKKTTLTLVEPDYSNPFFKIVKHNDKQTYLTNYIIKYEQCDLLDISNIDYILDTNKMPQYTCRLFRFFIANDRYDICDYLIHNRGIKYNYESIPSILHILDDEKEPALLEYIIANIDYFDIDLTFIIRHVLLFFNKDTQYFLDKINSLAQTKGIEISNKDYCDIANDLIESYDPDIESIKLFLDMGYINGNQIFIIACNFFSDLVKYLVEQNVNYDINDVLKINVSANILEYFHQKGHVFTDENIRDIMINLTEFEDIEKIKYMCSEKILCQEHIDSDFLTQLINKNFTNYLEILISEFDIRELIDIDCLMKKAISLDSPEIVNYCIQNGIDVENYLGLVFEHSSQKLLNMLMASGIEVPEKLSLLGLKSFENMDFVNVYINEYNYNLPYMFKMTLKNGTLKTFKYVIDTMIQKQQPIPDFVKLLVKYTLDKNMYTQKKNKEIVNCLINLDIEYNPLQQTLIALIKKDSNRVKNLIHENILYRSLVVLFMTVLTKNIDVLTLLLEKNTDEKYIKWASIFSVCDYETFRFVIEHTGVDIQRYQEEIILMSGICYNYNNYRYLKLMGFPDIYTAKKTIDKNGPVKYFVEFMKQYDISV</sequence>
<keyword id="KW-1185">Reference proteome</keyword>
<reference key="1">
    <citation type="journal article" date="2004" name="Science">
        <title>The 1.2-megabase genome sequence of Mimivirus.</title>
        <authorList>
            <person name="Raoult D."/>
            <person name="Audic S."/>
            <person name="Robert C."/>
            <person name="Abergel C."/>
            <person name="Renesto P."/>
            <person name="Ogata H."/>
            <person name="La Scola B."/>
            <person name="Susan M."/>
            <person name="Claverie J.-M."/>
        </authorList>
    </citation>
    <scope>NUCLEOTIDE SEQUENCE [LARGE SCALE GENOMIC DNA]</scope>
    <source>
        <strain>Rowbotham-Bradford</strain>
    </source>
</reference>
<proteinExistence type="predicted"/>
<organismHost>
    <name type="scientific">Acanthamoeba polyphaga</name>
    <name type="common">Amoeba</name>
    <dbReference type="NCBI Taxonomy" id="5757"/>
</organismHost>